<comment type="function">
    <text evidence="1">Part of a membrane-bound complex that couples electron transfer with translocation of ions across the membrane.</text>
</comment>
<comment type="cofactor">
    <cofactor evidence="1">
        <name>FMN</name>
        <dbReference type="ChEBI" id="CHEBI:58210"/>
    </cofactor>
</comment>
<comment type="subunit">
    <text evidence="1">The complex is composed of six subunits: RnfA, RnfB, RnfC, RnfD, RnfE and RnfG.</text>
</comment>
<comment type="similarity">
    <text evidence="1 2">Belongs to the RnfG family.</text>
</comment>
<comment type="caution">
    <text evidence="2">Compared to other bacterial RnfG, it has a divergent N-terminal domain.</text>
</comment>
<keyword id="KW-0249">Electron transport</keyword>
<keyword id="KW-0285">Flavoprotein</keyword>
<keyword id="KW-0288">FMN</keyword>
<keyword id="KW-0560">Oxidoreductase</keyword>
<keyword id="KW-0597">Phosphoprotein</keyword>
<keyword id="KW-1185">Reference proteome</keyword>
<keyword id="KW-0813">Transport</keyword>
<evidence type="ECO:0000255" key="1">
    <source>
        <dbReference type="HAMAP-Rule" id="MF_00479"/>
    </source>
</evidence>
<evidence type="ECO:0000305" key="2"/>
<reference key="1">
    <citation type="journal article" date="2000" name="Nature">
        <title>Genome sequence of the endocellular bacterial symbiont of aphids Buchnera sp. APS.</title>
        <authorList>
            <person name="Shigenobu S."/>
            <person name="Watanabe H."/>
            <person name="Hattori M."/>
            <person name="Sakaki Y."/>
            <person name="Ishikawa H."/>
        </authorList>
    </citation>
    <scope>NUCLEOTIDE SEQUENCE [LARGE SCALE GENOMIC DNA]</scope>
    <source>
        <strain>APS</strain>
    </source>
</reference>
<name>RNFG_BUCAI</name>
<dbReference type="EC" id="1.18.1.-" evidence="1"/>
<dbReference type="EMBL" id="BA000003">
    <property type="protein sequence ID" value="BAB12835.1"/>
    <property type="molecule type" value="Genomic_DNA"/>
</dbReference>
<dbReference type="RefSeq" id="NP_239949.1">
    <property type="nucleotide sequence ID" value="NC_002528.1"/>
</dbReference>
<dbReference type="SMR" id="P57217"/>
<dbReference type="STRING" id="563178.BUAP5A_115"/>
<dbReference type="EnsemblBacteria" id="BAB12835">
    <property type="protein sequence ID" value="BAB12835"/>
    <property type="gene ID" value="BAB12835"/>
</dbReference>
<dbReference type="KEGG" id="buc:BU117"/>
<dbReference type="PATRIC" id="fig|107806.10.peg.126"/>
<dbReference type="eggNOG" id="COG4659">
    <property type="taxonomic scope" value="Bacteria"/>
</dbReference>
<dbReference type="HOGENOM" id="CLU_1764544_0_0_6"/>
<dbReference type="Proteomes" id="UP000001806">
    <property type="component" value="Chromosome"/>
</dbReference>
<dbReference type="GO" id="GO:0005886">
    <property type="term" value="C:plasma membrane"/>
    <property type="evidence" value="ECO:0007669"/>
    <property type="project" value="InterPro"/>
</dbReference>
<dbReference type="GO" id="GO:0009055">
    <property type="term" value="F:electron transfer activity"/>
    <property type="evidence" value="ECO:0007669"/>
    <property type="project" value="InterPro"/>
</dbReference>
<dbReference type="GO" id="GO:0010181">
    <property type="term" value="F:FMN binding"/>
    <property type="evidence" value="ECO:0007669"/>
    <property type="project" value="InterPro"/>
</dbReference>
<dbReference type="GO" id="GO:0016491">
    <property type="term" value="F:oxidoreductase activity"/>
    <property type="evidence" value="ECO:0007669"/>
    <property type="project" value="UniProtKB-KW"/>
</dbReference>
<dbReference type="GO" id="GO:0022900">
    <property type="term" value="P:electron transport chain"/>
    <property type="evidence" value="ECO:0007669"/>
    <property type="project" value="InterPro"/>
</dbReference>
<dbReference type="InterPro" id="IPR007329">
    <property type="entry name" value="FMN-bd"/>
</dbReference>
<dbReference type="InterPro" id="IPR010209">
    <property type="entry name" value="Ion_transpt_RnfG/RsxG"/>
</dbReference>
<dbReference type="NCBIfam" id="TIGR01947">
    <property type="entry name" value="rnfG"/>
    <property type="match status" value="1"/>
</dbReference>
<dbReference type="PANTHER" id="PTHR36118">
    <property type="entry name" value="ION-TRANSLOCATING OXIDOREDUCTASE COMPLEX SUBUNIT G"/>
    <property type="match status" value="1"/>
</dbReference>
<dbReference type="PANTHER" id="PTHR36118:SF1">
    <property type="entry name" value="ION-TRANSLOCATING OXIDOREDUCTASE COMPLEX SUBUNIT G"/>
    <property type="match status" value="1"/>
</dbReference>
<dbReference type="Pfam" id="PF04205">
    <property type="entry name" value="FMN_bind"/>
    <property type="match status" value="1"/>
</dbReference>
<dbReference type="SMART" id="SM00900">
    <property type="entry name" value="FMN_bind"/>
    <property type="match status" value="1"/>
</dbReference>
<proteinExistence type="inferred from homology"/>
<feature type="chain" id="PRO_0000214630" description="Ion-translocating oxidoreductase complex subunit G">
    <location>
        <begin position="1"/>
        <end position="164"/>
    </location>
</feature>
<feature type="modified residue" description="FMN phosphoryl threonine" evidence="1">
    <location>
        <position position="125"/>
    </location>
</feature>
<organism>
    <name type="scientific">Buchnera aphidicola subsp. Acyrthosiphon pisum (strain APS)</name>
    <name type="common">Acyrthosiphon pisum symbiotic bacterium</name>
    <dbReference type="NCBI Taxonomy" id="107806"/>
    <lineage>
        <taxon>Bacteria</taxon>
        <taxon>Pseudomonadati</taxon>
        <taxon>Pseudomonadota</taxon>
        <taxon>Gammaproteobacteria</taxon>
        <taxon>Enterobacterales</taxon>
        <taxon>Erwiniaceae</taxon>
        <taxon>Buchnera</taxon>
    </lineage>
</organism>
<gene>
    <name evidence="1" type="primary">rnfG</name>
    <name type="ordered locus">BU117</name>
</gene>
<sequence length="164" mass="18762">MPSNIYHTFEKKSYKIKNKLLGDHKIHNLWVLFKNKKPVAAIVETTAPDGYSGAINMLVAAYFNGEIINARVLSHKETPGIGDKIDLSISNWITRFTGMYVASIEDKDFKLRKYGGKIEQFTGATITPQSVTNSIKRTVVFIKKIPFIFDFLNKGIYEYQKFFK</sequence>
<accession>P57217</accession>
<protein>
    <recommendedName>
        <fullName evidence="1">Ion-translocating oxidoreductase complex subunit G</fullName>
        <ecNumber evidence="1">1.18.1.-</ecNumber>
    </recommendedName>
    <alternativeName>
        <fullName evidence="1">Rnf electron transport complex subunit G</fullName>
    </alternativeName>
</protein>